<comment type="function">
    <text evidence="1">A factor required for optimal assembly of photosystem II (PSII), acting in the early stages of PSII assembly. Also plays a role in replacement of photodamaged D1 (psbA). Assists YidC in synthesis of chlorophyll-binding proteins.</text>
</comment>
<comment type="subunit">
    <text evidence="1">Part of early PSII assembly complexes which includes D1 (psbA) and PsbI; not found in mature PSII. Binds to the lumenal side of PSII complexes. Interacts with YidC.</text>
</comment>
<comment type="subcellular location">
    <subcellularLocation>
        <location evidence="1">Cellular thylakoid membrane</location>
        <topology evidence="1">Lipid-anchor</topology>
        <orientation evidence="1">Lumenal side</orientation>
    </subcellularLocation>
    <text evidence="1">Associated with a PSII precusor complex on the lumenal side of the thylakoid membrane.</text>
</comment>
<comment type="domain">
    <text evidence="1">A 7-bladed beta-propeller torus, about 55 by 55 Angstroms, with a depth of about 25 Angstroms and a central pore.</text>
</comment>
<comment type="similarity">
    <text evidence="1">Belongs to the Ycf48 family.</text>
</comment>
<name>YCF48_PROMM</name>
<dbReference type="EMBL" id="BX548175">
    <property type="protein sequence ID" value="CAE22070.1"/>
    <property type="molecule type" value="Genomic_DNA"/>
</dbReference>
<dbReference type="RefSeq" id="WP_011131261.1">
    <property type="nucleotide sequence ID" value="NC_005071.1"/>
</dbReference>
<dbReference type="SMR" id="Q7V4Q3"/>
<dbReference type="KEGG" id="pmt:PMT_1895"/>
<dbReference type="eggNOG" id="COG4447">
    <property type="taxonomic scope" value="Bacteria"/>
</dbReference>
<dbReference type="HOGENOM" id="CLU_057027_0_0_3"/>
<dbReference type="OrthoDB" id="9813892at2"/>
<dbReference type="Proteomes" id="UP000001423">
    <property type="component" value="Chromosome"/>
</dbReference>
<dbReference type="GO" id="GO:0009523">
    <property type="term" value="C:photosystem II"/>
    <property type="evidence" value="ECO:0007669"/>
    <property type="project" value="UniProtKB-KW"/>
</dbReference>
<dbReference type="GO" id="GO:0031676">
    <property type="term" value="C:plasma membrane-derived thylakoid membrane"/>
    <property type="evidence" value="ECO:0007669"/>
    <property type="project" value="UniProtKB-SubCell"/>
</dbReference>
<dbReference type="GO" id="GO:0031977">
    <property type="term" value="C:thylakoid lumen"/>
    <property type="evidence" value="ECO:0007669"/>
    <property type="project" value="UniProtKB-UniRule"/>
</dbReference>
<dbReference type="GO" id="GO:0015979">
    <property type="term" value="P:photosynthesis"/>
    <property type="evidence" value="ECO:0007669"/>
    <property type="project" value="UniProtKB-KW"/>
</dbReference>
<dbReference type="Gene3D" id="2.130.10.10">
    <property type="entry name" value="YVTN repeat-like/Quinoprotein amine dehydrogenase"/>
    <property type="match status" value="1"/>
</dbReference>
<dbReference type="HAMAP" id="MF_01348">
    <property type="entry name" value="Ycf48"/>
    <property type="match status" value="1"/>
</dbReference>
<dbReference type="InterPro" id="IPR028203">
    <property type="entry name" value="PSII_CF48-like_dom"/>
</dbReference>
<dbReference type="InterPro" id="IPR015943">
    <property type="entry name" value="WD40/YVTN_repeat-like_dom_sf"/>
</dbReference>
<dbReference type="InterPro" id="IPR016705">
    <property type="entry name" value="Ycf48/Hcf136"/>
</dbReference>
<dbReference type="NCBIfam" id="NF010237">
    <property type="entry name" value="PRK13684.1"/>
    <property type="match status" value="1"/>
</dbReference>
<dbReference type="PANTHER" id="PTHR47199">
    <property type="entry name" value="PHOTOSYSTEM II STABILITY/ASSEMBLY FACTOR HCF136, CHLOROPLASTIC"/>
    <property type="match status" value="1"/>
</dbReference>
<dbReference type="PANTHER" id="PTHR47199:SF2">
    <property type="entry name" value="PHOTOSYSTEM II STABILITY_ASSEMBLY FACTOR HCF136, CHLOROPLASTIC"/>
    <property type="match status" value="1"/>
</dbReference>
<dbReference type="Pfam" id="PF14870">
    <property type="entry name" value="PSII_BNR"/>
    <property type="match status" value="1"/>
</dbReference>
<dbReference type="PIRSF" id="PIRSF017875">
    <property type="entry name" value="PSII_HCF136"/>
    <property type="match status" value="1"/>
</dbReference>
<dbReference type="SUPFAM" id="SSF110296">
    <property type="entry name" value="Oligoxyloglucan reducing end-specific cellobiohydrolase"/>
    <property type="match status" value="1"/>
</dbReference>
<dbReference type="PROSITE" id="PS51257">
    <property type="entry name" value="PROKAR_LIPOPROTEIN"/>
    <property type="match status" value="1"/>
</dbReference>
<proteinExistence type="inferred from homology"/>
<protein>
    <recommendedName>
        <fullName evidence="1">Photosystem II assembly lipoprotein Ycf48</fullName>
    </recommendedName>
</protein>
<keyword id="KW-0449">Lipoprotein</keyword>
<keyword id="KW-0472">Membrane</keyword>
<keyword id="KW-0564">Palmitate</keyword>
<keyword id="KW-0602">Photosynthesis</keyword>
<keyword id="KW-0604">Photosystem II</keyword>
<keyword id="KW-1185">Reference proteome</keyword>
<keyword id="KW-0732">Signal</keyword>
<keyword id="KW-0793">Thylakoid</keyword>
<feature type="signal peptide" evidence="1">
    <location>
        <begin position="1"/>
        <end position="23"/>
    </location>
</feature>
<feature type="chain" id="PRO_0000239677" description="Photosystem II assembly lipoprotein Ycf48" evidence="1">
    <location>
        <begin position="24"/>
        <end position="335"/>
    </location>
</feature>
<feature type="lipid moiety-binding region" description="N-palmitoyl cysteine" evidence="1">
    <location>
        <position position="24"/>
    </location>
</feature>
<feature type="lipid moiety-binding region" description="S-diacylglycerol cysteine" evidence="1">
    <location>
        <position position="24"/>
    </location>
</feature>
<evidence type="ECO:0000255" key="1">
    <source>
        <dbReference type="HAMAP-Rule" id="MF_01348"/>
    </source>
</evidence>
<accession>Q7V4Q3</accession>
<reference key="1">
    <citation type="journal article" date="2003" name="Nature">
        <title>Genome divergence in two Prochlorococcus ecotypes reflects oceanic niche differentiation.</title>
        <authorList>
            <person name="Rocap G."/>
            <person name="Larimer F.W."/>
            <person name="Lamerdin J.E."/>
            <person name="Malfatti S."/>
            <person name="Chain P."/>
            <person name="Ahlgren N.A."/>
            <person name="Arellano A."/>
            <person name="Coleman M."/>
            <person name="Hauser L."/>
            <person name="Hess W.R."/>
            <person name="Johnson Z.I."/>
            <person name="Land M.L."/>
            <person name="Lindell D."/>
            <person name="Post A.F."/>
            <person name="Regala W."/>
            <person name="Shah M."/>
            <person name="Shaw S.L."/>
            <person name="Steglich C."/>
            <person name="Sullivan M.B."/>
            <person name="Ting C.S."/>
            <person name="Tolonen A."/>
            <person name="Webb E.A."/>
            <person name="Zinser E.R."/>
            <person name="Chisholm S.W."/>
        </authorList>
    </citation>
    <scope>NUCLEOTIDE SEQUENCE [LARGE SCALE GENOMIC DNA]</scope>
    <source>
        <strain>MIT 9313</strain>
    </source>
</reference>
<organism>
    <name type="scientific">Prochlorococcus marinus (strain MIT 9313)</name>
    <dbReference type="NCBI Taxonomy" id="74547"/>
    <lineage>
        <taxon>Bacteria</taxon>
        <taxon>Bacillati</taxon>
        <taxon>Cyanobacteriota</taxon>
        <taxon>Cyanophyceae</taxon>
        <taxon>Synechococcales</taxon>
        <taxon>Prochlorococcaceae</taxon>
        <taxon>Prochlorococcus</taxon>
    </lineage>
</organism>
<gene>
    <name evidence="1" type="primary">ycf48</name>
    <name type="ordered locus">PMT_1895</name>
</gene>
<sequence>MSRLFSNLFNLLLIAAIGFGLSGCVTSRLPVASTSPWQPLELNTESNPLDISFSDANHGFVVGTNRLIMESNDGGVSWKKRSLDLEEDENFRLISIDFNGNEGWIAGQPGLVMHSTDAGKNWSRLKLENKLPGDPYLITNLGPNNAELATNAGAIYRTSDGGTTWKATVSEAAGAVRDLRRSAAGNYVSVSSLGNFFSTLDLGQDVWQNHERVSSKRVQSLGYQPNGELWMVARGAEIRLNDQPGNVDSWGKAMIPITNGYNYLDLSWDPNGGIWAAGGNGTLIKTLDDGKSWQIDPMGDTQPSNLIRILFDTSSESQAKGFVLGERGHLLRWVG</sequence>